<organism>
    <name type="scientific">Pseudoalteromonas atlantica (strain T6c / ATCC BAA-1087)</name>
    <dbReference type="NCBI Taxonomy" id="3042615"/>
    <lineage>
        <taxon>Bacteria</taxon>
        <taxon>Pseudomonadati</taxon>
        <taxon>Pseudomonadota</taxon>
        <taxon>Gammaproteobacteria</taxon>
        <taxon>Alteromonadales</taxon>
        <taxon>Alteromonadaceae</taxon>
        <taxon>Paraglaciecola</taxon>
    </lineage>
</organism>
<feature type="chain" id="PRO_1000015558" description="33 kDa chaperonin">
    <location>
        <begin position="1"/>
        <end position="297"/>
    </location>
</feature>
<feature type="disulfide bond" description="Redox-active" evidence="1">
    <location>
        <begin position="234"/>
        <end position="236"/>
    </location>
</feature>
<feature type="disulfide bond" description="Redox-active" evidence="1">
    <location>
        <begin position="267"/>
        <end position="270"/>
    </location>
</feature>
<comment type="function">
    <text evidence="1">Redox regulated molecular chaperone. Protects both thermally unfolding and oxidatively damaged proteins from irreversible aggregation. Plays an important role in the bacterial defense system toward oxidative stress.</text>
</comment>
<comment type="subcellular location">
    <subcellularLocation>
        <location evidence="1">Cytoplasm</location>
    </subcellularLocation>
</comment>
<comment type="PTM">
    <text evidence="1">Under oxidizing conditions two disulfide bonds are formed involving the reactive cysteines. Under reducing conditions zinc is bound to the reactive cysteines and the protein is inactive.</text>
</comment>
<comment type="similarity">
    <text evidence="1">Belongs to the HSP33 family.</text>
</comment>
<gene>
    <name evidence="1" type="primary">hslO</name>
    <name type="ordered locus">Patl_0227</name>
</gene>
<reference key="1">
    <citation type="submission" date="2006-06" db="EMBL/GenBank/DDBJ databases">
        <title>Complete sequence of Pseudoalteromonas atlantica T6c.</title>
        <authorList>
            <consortium name="US DOE Joint Genome Institute"/>
            <person name="Copeland A."/>
            <person name="Lucas S."/>
            <person name="Lapidus A."/>
            <person name="Barry K."/>
            <person name="Detter J.C."/>
            <person name="Glavina del Rio T."/>
            <person name="Hammon N."/>
            <person name="Israni S."/>
            <person name="Dalin E."/>
            <person name="Tice H."/>
            <person name="Pitluck S."/>
            <person name="Saunders E."/>
            <person name="Brettin T."/>
            <person name="Bruce D."/>
            <person name="Han C."/>
            <person name="Tapia R."/>
            <person name="Gilna P."/>
            <person name="Schmutz J."/>
            <person name="Larimer F."/>
            <person name="Land M."/>
            <person name="Hauser L."/>
            <person name="Kyrpides N."/>
            <person name="Kim E."/>
            <person name="Karls A.C."/>
            <person name="Bartlett D."/>
            <person name="Higgins B.P."/>
            <person name="Richardson P."/>
        </authorList>
    </citation>
    <scope>NUCLEOTIDE SEQUENCE [LARGE SCALE GENOMIC DNA]</scope>
    <source>
        <strain>T6c / ATCC BAA-1087</strain>
    </source>
</reference>
<dbReference type="EMBL" id="CP000388">
    <property type="protein sequence ID" value="ABG38759.1"/>
    <property type="molecule type" value="Genomic_DNA"/>
</dbReference>
<dbReference type="RefSeq" id="WP_011573162.1">
    <property type="nucleotide sequence ID" value="NC_008228.1"/>
</dbReference>
<dbReference type="SMR" id="Q15ZC9"/>
<dbReference type="STRING" id="342610.Patl_0227"/>
<dbReference type="KEGG" id="pat:Patl_0227"/>
<dbReference type="eggNOG" id="COG1281">
    <property type="taxonomic scope" value="Bacteria"/>
</dbReference>
<dbReference type="HOGENOM" id="CLU_054493_0_0_6"/>
<dbReference type="OrthoDB" id="9793753at2"/>
<dbReference type="Proteomes" id="UP000001981">
    <property type="component" value="Chromosome"/>
</dbReference>
<dbReference type="GO" id="GO:0005737">
    <property type="term" value="C:cytoplasm"/>
    <property type="evidence" value="ECO:0007669"/>
    <property type="project" value="UniProtKB-SubCell"/>
</dbReference>
<dbReference type="GO" id="GO:0044183">
    <property type="term" value="F:protein folding chaperone"/>
    <property type="evidence" value="ECO:0007669"/>
    <property type="project" value="TreeGrafter"/>
</dbReference>
<dbReference type="GO" id="GO:0051082">
    <property type="term" value="F:unfolded protein binding"/>
    <property type="evidence" value="ECO:0007669"/>
    <property type="project" value="UniProtKB-UniRule"/>
</dbReference>
<dbReference type="GO" id="GO:0042026">
    <property type="term" value="P:protein refolding"/>
    <property type="evidence" value="ECO:0007669"/>
    <property type="project" value="TreeGrafter"/>
</dbReference>
<dbReference type="CDD" id="cd00498">
    <property type="entry name" value="Hsp33"/>
    <property type="match status" value="1"/>
</dbReference>
<dbReference type="Gene3D" id="1.10.287.480">
    <property type="entry name" value="helix hairpin bin"/>
    <property type="match status" value="1"/>
</dbReference>
<dbReference type="Gene3D" id="3.55.30.10">
    <property type="entry name" value="Hsp33 domain"/>
    <property type="match status" value="1"/>
</dbReference>
<dbReference type="Gene3D" id="3.90.1280.10">
    <property type="entry name" value="HSP33 redox switch-like"/>
    <property type="match status" value="1"/>
</dbReference>
<dbReference type="HAMAP" id="MF_00117">
    <property type="entry name" value="HslO"/>
    <property type="match status" value="1"/>
</dbReference>
<dbReference type="InterPro" id="IPR000397">
    <property type="entry name" value="Heat_shock_Hsp33"/>
</dbReference>
<dbReference type="InterPro" id="IPR016154">
    <property type="entry name" value="Heat_shock_Hsp33_C"/>
</dbReference>
<dbReference type="InterPro" id="IPR016153">
    <property type="entry name" value="Heat_shock_Hsp33_N"/>
</dbReference>
<dbReference type="InterPro" id="IPR023212">
    <property type="entry name" value="Hsp33_helix_hairpin_bin_dom_sf"/>
</dbReference>
<dbReference type="NCBIfam" id="NF001033">
    <property type="entry name" value="PRK00114.1"/>
    <property type="match status" value="1"/>
</dbReference>
<dbReference type="PANTHER" id="PTHR30111">
    <property type="entry name" value="33 KDA CHAPERONIN"/>
    <property type="match status" value="1"/>
</dbReference>
<dbReference type="PANTHER" id="PTHR30111:SF1">
    <property type="entry name" value="33 KDA CHAPERONIN"/>
    <property type="match status" value="1"/>
</dbReference>
<dbReference type="Pfam" id="PF01430">
    <property type="entry name" value="HSP33"/>
    <property type="match status" value="1"/>
</dbReference>
<dbReference type="PIRSF" id="PIRSF005261">
    <property type="entry name" value="Heat_shock_Hsp33"/>
    <property type="match status" value="1"/>
</dbReference>
<dbReference type="SUPFAM" id="SSF64397">
    <property type="entry name" value="Hsp33 domain"/>
    <property type="match status" value="1"/>
</dbReference>
<dbReference type="SUPFAM" id="SSF118352">
    <property type="entry name" value="HSP33 redox switch-like"/>
    <property type="match status" value="1"/>
</dbReference>
<protein>
    <recommendedName>
        <fullName evidence="1">33 kDa chaperonin</fullName>
    </recommendedName>
    <alternativeName>
        <fullName evidence="1">Heat shock protein 33 homolog</fullName>
        <shortName evidence="1">HSP33</shortName>
    </alternativeName>
</protein>
<name>HSLO_PSEA6</name>
<accession>Q15ZC9</accession>
<keyword id="KW-0143">Chaperone</keyword>
<keyword id="KW-0963">Cytoplasm</keyword>
<keyword id="KW-1015">Disulfide bond</keyword>
<keyword id="KW-0676">Redox-active center</keyword>
<keyword id="KW-0862">Zinc</keyword>
<evidence type="ECO:0000255" key="1">
    <source>
        <dbReference type="HAMAP-Rule" id="MF_00117"/>
    </source>
</evidence>
<sequence length="297" mass="33328">MSFDQLHRYLFNQAHVRGELVRLENSYQSILDSYAYPPVIQKLLGELMAATSLLTATLKFEGDIALQLQSDGPVNYAVINGTHDQQLRGVARWDESLAELPTDFSQLFTKGILVITITPEDGERYQGMVALDKPTLAECIESYFQQSEQLATKVILRTQQTDSGAKACGMFLQILPTSSQATATTDTGFEHLAKLTETIKNEELFSLPAEDILYRLYHQEEIEVYPPADIIFKCSCSRERSANALAAVEKAELLDIVATEGAIKMNCQYCHREYRFDEIDVHAIHAGTFAMDTQNDQ</sequence>
<proteinExistence type="inferred from homology"/>